<comment type="function">
    <text evidence="1 5">Catalyzes the hydrolytic cleavage of the carbon-nitrogen bond in imidazolone-5-propanoate to yield N-formimidoyl-L-glutamate. It is the third step in the universal histidine degradation pathway.</text>
</comment>
<comment type="catalytic activity">
    <reaction evidence="1 5">
        <text>4-imidazolone-5-propanoate + H2O = N-formimidoyl-L-glutamate</text>
        <dbReference type="Rhea" id="RHEA:23660"/>
        <dbReference type="ChEBI" id="CHEBI:15377"/>
        <dbReference type="ChEBI" id="CHEBI:58928"/>
        <dbReference type="ChEBI" id="CHEBI:77893"/>
        <dbReference type="EC" id="3.5.2.7"/>
    </reaction>
</comment>
<comment type="cofactor">
    <cofactor evidence="1 5">
        <name>Zn(2+)</name>
        <dbReference type="ChEBI" id="CHEBI:29105"/>
    </cofactor>
    <cofactor evidence="1">
        <name>Fe(3+)</name>
        <dbReference type="ChEBI" id="CHEBI:29034"/>
    </cofactor>
    <text evidence="1">Binds 1 zinc or iron ion per subunit.</text>
</comment>
<comment type="pathway">
    <text evidence="1">Amino-acid degradation; L-histidine degradation into L-glutamate; N-formimidoyl-L-glutamate from L-histidine: step 3/3.</text>
</comment>
<comment type="subunit">
    <text evidence="2">Homodimer.</text>
</comment>
<comment type="subcellular location">
    <subcellularLocation>
        <location evidence="1">Cytoplasm</location>
    </subcellularLocation>
</comment>
<comment type="similarity">
    <text evidence="1">Belongs to the metallo-dependent hydrolases superfamily. HutI family.</text>
</comment>
<proteinExistence type="evidence at protein level"/>
<accession>P42084</accession>
<organism>
    <name type="scientific">Bacillus subtilis (strain 168)</name>
    <dbReference type="NCBI Taxonomy" id="224308"/>
    <lineage>
        <taxon>Bacteria</taxon>
        <taxon>Bacillati</taxon>
        <taxon>Bacillota</taxon>
        <taxon>Bacilli</taxon>
        <taxon>Bacillales</taxon>
        <taxon>Bacillaceae</taxon>
        <taxon>Bacillus</taxon>
    </lineage>
</organism>
<sequence length="421" mass="45564">MPKQIDTILINIGQLLTMESSGPRAGKSMQDLHVIEDAVVGIHEQKIVFAGQKGAEAGYEADEIIDCSGRLVTPGLVDPHTHLVFGGSREKEMNLKLQGISYLDILAQGGGILSTVKDTRAASEEELLQKAHFHLQRMLSYGTTTAEVKSGYGLEKETELKQLRVAKKLHESQPVDLVSTFMGAHAIPPEYQNDPDDFLDQMLSLLPEIKEQELASFADIFTETGVFTVSQSRRYLQKAAEAGFGLKIHADEIDPLGGAELAGKLKAVSADHLVGTSDEGIKKLAEAGTIAVLLPGTTFYLGKSTYARARAMIDEGVCVSLATDFNPGSSPTENIQLIMSIAALHLKMTAEEIWHAVTVNAAYAIGKGEEAGQLKAGRSADLVIWQAPNYMYIPYHYGVNHVHQVMKNGTIVVNREGAILG</sequence>
<gene>
    <name evidence="1" type="primary">hutI</name>
    <name type="ordered locus">BSU39370</name>
    <name type="ORF">EE57B</name>
</gene>
<keyword id="KW-0002">3D-structure</keyword>
<keyword id="KW-0963">Cytoplasm</keyword>
<keyword id="KW-0369">Histidine metabolism</keyword>
<keyword id="KW-0378">Hydrolase</keyword>
<keyword id="KW-0408">Iron</keyword>
<keyword id="KW-0479">Metal-binding</keyword>
<keyword id="KW-1185">Reference proteome</keyword>
<keyword id="KW-0862">Zinc</keyword>
<feature type="chain" id="PRO_0000160944" description="Imidazolonepropionase">
    <location>
        <begin position="1"/>
        <end position="421"/>
    </location>
</feature>
<feature type="binding site" evidence="1">
    <location>
        <position position="80"/>
    </location>
    <ligand>
        <name>Fe(3+)</name>
        <dbReference type="ChEBI" id="CHEBI:29034"/>
    </ligand>
</feature>
<feature type="binding site" evidence="2 6 7">
    <location>
        <position position="80"/>
    </location>
    <ligand>
        <name>Zn(2+)</name>
        <dbReference type="ChEBI" id="CHEBI:29105"/>
    </ligand>
</feature>
<feature type="binding site" evidence="1">
    <location>
        <position position="82"/>
    </location>
    <ligand>
        <name>Fe(3+)</name>
        <dbReference type="ChEBI" id="CHEBI:29034"/>
    </ligand>
</feature>
<feature type="binding site" evidence="2 6 7">
    <location>
        <position position="82"/>
    </location>
    <ligand>
        <name>Zn(2+)</name>
        <dbReference type="ChEBI" id="CHEBI:29105"/>
    </ligand>
</feature>
<feature type="binding site" evidence="4 7">
    <location>
        <position position="89"/>
    </location>
    <ligand>
        <name>4-imidazolone-5-propanoate</name>
        <dbReference type="ChEBI" id="CHEBI:77893"/>
    </ligand>
</feature>
<feature type="binding site" evidence="4 7">
    <location>
        <position position="152"/>
    </location>
    <ligand>
        <name>4-imidazolone-5-propanoate</name>
        <dbReference type="ChEBI" id="CHEBI:77893"/>
    </ligand>
</feature>
<feature type="binding site" evidence="1">
    <location>
        <position position="152"/>
    </location>
    <ligand>
        <name>N-formimidoyl-L-glutamate</name>
        <dbReference type="ChEBI" id="CHEBI:58928"/>
    </ligand>
</feature>
<feature type="binding site" evidence="4 7">
    <location>
        <position position="185"/>
    </location>
    <ligand>
        <name>4-imidazolone-5-propanoate</name>
        <dbReference type="ChEBI" id="CHEBI:77893"/>
    </ligand>
</feature>
<feature type="binding site" evidence="1">
    <location>
        <position position="249"/>
    </location>
    <ligand>
        <name>Fe(3+)</name>
        <dbReference type="ChEBI" id="CHEBI:29034"/>
    </ligand>
</feature>
<feature type="binding site" evidence="2 6 7">
    <location>
        <position position="249"/>
    </location>
    <ligand>
        <name>Zn(2+)</name>
        <dbReference type="ChEBI" id="CHEBI:29105"/>
    </ligand>
</feature>
<feature type="binding site" evidence="4 7">
    <location>
        <position position="252"/>
    </location>
    <ligand>
        <name>4-imidazolone-5-propanoate</name>
        <dbReference type="ChEBI" id="CHEBI:77893"/>
    </ligand>
</feature>
<feature type="binding site" evidence="1">
    <location>
        <position position="324"/>
    </location>
    <ligand>
        <name>Fe(3+)</name>
        <dbReference type="ChEBI" id="CHEBI:29034"/>
    </ligand>
</feature>
<feature type="binding site" evidence="2 6 7">
    <location>
        <position position="324"/>
    </location>
    <ligand>
        <name>Zn(2+)</name>
        <dbReference type="ChEBI" id="CHEBI:29105"/>
    </ligand>
</feature>
<feature type="binding site" evidence="1">
    <location>
        <position position="326"/>
    </location>
    <ligand>
        <name>N-formimidoyl-L-glutamate</name>
        <dbReference type="ChEBI" id="CHEBI:58928"/>
    </ligand>
</feature>
<feature type="binding site" evidence="1">
    <location>
        <position position="328"/>
    </location>
    <ligand>
        <name>N-formimidoyl-L-glutamate</name>
        <dbReference type="ChEBI" id="CHEBI:58928"/>
    </ligand>
</feature>
<feature type="binding site" evidence="1">
    <location>
        <position position="329"/>
    </location>
    <ligand>
        <name>4-imidazolone-5-propanoate</name>
        <dbReference type="ChEBI" id="CHEBI:77893"/>
    </ligand>
</feature>
<feature type="strand" evidence="8">
    <location>
        <begin position="4"/>
        <end position="15"/>
    </location>
</feature>
<feature type="helix" evidence="8">
    <location>
        <begin position="26"/>
        <end position="29"/>
    </location>
</feature>
<feature type="strand" evidence="8">
    <location>
        <begin position="35"/>
        <end position="43"/>
    </location>
</feature>
<feature type="strand" evidence="8">
    <location>
        <begin position="46"/>
        <end position="52"/>
    </location>
</feature>
<feature type="turn" evidence="8">
    <location>
        <begin position="53"/>
        <end position="58"/>
    </location>
</feature>
<feature type="strand" evidence="8">
    <location>
        <begin position="60"/>
        <end position="66"/>
    </location>
</feature>
<feature type="strand" evidence="8">
    <location>
        <begin position="71"/>
        <end position="74"/>
    </location>
</feature>
<feature type="strand" evidence="8">
    <location>
        <begin position="76"/>
        <end position="78"/>
    </location>
</feature>
<feature type="helix" evidence="8">
    <location>
        <begin position="90"/>
        <end position="92"/>
    </location>
</feature>
<feature type="helix" evidence="8">
    <location>
        <begin position="93"/>
        <end position="97"/>
    </location>
</feature>
<feature type="helix" evidence="8">
    <location>
        <begin position="102"/>
        <end position="107"/>
    </location>
</feature>
<feature type="helix" evidence="8">
    <location>
        <begin position="112"/>
        <end position="121"/>
    </location>
</feature>
<feature type="helix" evidence="8">
    <location>
        <begin position="124"/>
        <end position="140"/>
    </location>
</feature>
<feature type="strand" evidence="8">
    <location>
        <begin position="143"/>
        <end position="149"/>
    </location>
</feature>
<feature type="helix" evidence="8">
    <location>
        <begin position="156"/>
        <end position="172"/>
    </location>
</feature>
<feature type="strand" evidence="8">
    <location>
        <begin position="173"/>
        <end position="186"/>
    </location>
</feature>
<feature type="helix" evidence="8">
    <location>
        <begin position="189"/>
        <end position="191"/>
    </location>
</feature>
<feature type="helix" evidence="8">
    <location>
        <begin position="195"/>
        <end position="203"/>
    </location>
</feature>
<feature type="helix" evidence="8">
    <location>
        <begin position="206"/>
        <end position="211"/>
    </location>
</feature>
<feature type="strand" evidence="8">
    <location>
        <begin position="216"/>
        <end position="222"/>
    </location>
</feature>
<feature type="helix" evidence="8">
    <location>
        <begin position="229"/>
        <end position="241"/>
    </location>
</feature>
<feature type="strand" evidence="8">
    <location>
        <begin position="245"/>
        <end position="250"/>
    </location>
</feature>
<feature type="strand" evidence="8">
    <location>
        <begin position="252"/>
        <end position="254"/>
    </location>
</feature>
<feature type="helix" evidence="8">
    <location>
        <begin position="258"/>
        <end position="264"/>
    </location>
</feature>
<feature type="strand" evidence="8">
    <location>
        <begin position="268"/>
        <end position="272"/>
    </location>
</feature>
<feature type="helix" evidence="8">
    <location>
        <begin position="278"/>
        <end position="287"/>
    </location>
</feature>
<feature type="strand" evidence="8">
    <location>
        <begin position="290"/>
        <end position="293"/>
    </location>
</feature>
<feature type="helix" evidence="8">
    <location>
        <begin position="295"/>
        <end position="300"/>
    </location>
</feature>
<feature type="helix" evidence="8">
    <location>
        <begin position="309"/>
        <end position="314"/>
    </location>
</feature>
<feature type="strand" evidence="8">
    <location>
        <begin position="319"/>
        <end position="321"/>
    </location>
</feature>
<feature type="turn" evidence="8">
    <location>
        <begin position="327"/>
        <end position="329"/>
    </location>
</feature>
<feature type="helix" evidence="8">
    <location>
        <begin position="335"/>
        <end position="345"/>
    </location>
</feature>
<feature type="helix" evidence="8">
    <location>
        <begin position="350"/>
        <end position="356"/>
    </location>
</feature>
<feature type="helix" evidence="8">
    <location>
        <begin position="359"/>
        <end position="364"/>
    </location>
</feature>
<feature type="turn" evidence="8">
    <location>
        <begin position="368"/>
        <end position="370"/>
    </location>
</feature>
<feature type="strand" evidence="8">
    <location>
        <begin position="382"/>
        <end position="389"/>
    </location>
</feature>
<feature type="helix" evidence="8">
    <location>
        <begin position="392"/>
        <end position="395"/>
    </location>
</feature>
<feature type="strand" evidence="8">
    <location>
        <begin position="402"/>
        <end position="407"/>
    </location>
</feature>
<feature type="strand" evidence="8">
    <location>
        <begin position="410"/>
        <end position="414"/>
    </location>
</feature>
<name>HUTI_BACSU</name>
<evidence type="ECO:0000255" key="1">
    <source>
        <dbReference type="HAMAP-Rule" id="MF_00372"/>
    </source>
</evidence>
<evidence type="ECO:0000269" key="2">
    <source>
    </source>
</evidence>
<evidence type="ECO:0000303" key="3">
    <source>
    </source>
</evidence>
<evidence type="ECO:0000305" key="4">
    <source>
    </source>
</evidence>
<evidence type="ECO:0000305" key="5">
    <source>
    </source>
</evidence>
<evidence type="ECO:0007744" key="6">
    <source>
        <dbReference type="PDB" id="2BB0"/>
    </source>
</evidence>
<evidence type="ECO:0007744" key="7">
    <source>
        <dbReference type="PDB" id="2G3F"/>
    </source>
</evidence>
<evidence type="ECO:0007829" key="8">
    <source>
        <dbReference type="PDB" id="2BB0"/>
    </source>
</evidence>
<dbReference type="EC" id="3.5.2.7" evidence="1 5"/>
<dbReference type="EMBL" id="D31856">
    <property type="protein sequence ID" value="BAA06642.1"/>
    <property type="molecule type" value="Genomic_DNA"/>
</dbReference>
<dbReference type="EMBL" id="AL009126">
    <property type="protein sequence ID" value="CAB15973.1"/>
    <property type="molecule type" value="Genomic_DNA"/>
</dbReference>
<dbReference type="PIR" id="D69643">
    <property type="entry name" value="D69643"/>
</dbReference>
<dbReference type="RefSeq" id="NP_391816.1">
    <property type="nucleotide sequence ID" value="NC_000964.3"/>
</dbReference>
<dbReference type="RefSeq" id="WP_003244327.1">
    <property type="nucleotide sequence ID" value="NZ_OZ025638.1"/>
</dbReference>
<dbReference type="PDB" id="2BB0">
    <property type="method" value="X-ray"/>
    <property type="resolution" value="2.00 A"/>
    <property type="chains" value="A/B=1-421"/>
</dbReference>
<dbReference type="PDB" id="2G3F">
    <property type="method" value="X-ray"/>
    <property type="resolution" value="2.00 A"/>
    <property type="chains" value="A/B=1-421"/>
</dbReference>
<dbReference type="PDBsum" id="2BB0"/>
<dbReference type="PDBsum" id="2G3F"/>
<dbReference type="SMR" id="P42084"/>
<dbReference type="FunCoup" id="P42084">
    <property type="interactions" value="66"/>
</dbReference>
<dbReference type="STRING" id="224308.BSU39370"/>
<dbReference type="PaxDb" id="224308-BSU39370"/>
<dbReference type="EnsemblBacteria" id="CAB15973">
    <property type="protein sequence ID" value="CAB15973"/>
    <property type="gene ID" value="BSU_39370"/>
</dbReference>
<dbReference type="GeneID" id="937531"/>
<dbReference type="KEGG" id="bsu:BSU39370"/>
<dbReference type="PATRIC" id="fig|224308.179.peg.4262"/>
<dbReference type="eggNOG" id="COG1228">
    <property type="taxonomic scope" value="Bacteria"/>
</dbReference>
<dbReference type="InParanoid" id="P42084"/>
<dbReference type="OrthoDB" id="9776455at2"/>
<dbReference type="PhylomeDB" id="P42084"/>
<dbReference type="BioCyc" id="BSUB:BSU39370-MONOMER"/>
<dbReference type="BioCyc" id="MetaCyc:HUTIBACSU-MONOMER"/>
<dbReference type="BRENDA" id="3.5.2.7">
    <property type="organism ID" value="658"/>
</dbReference>
<dbReference type="UniPathway" id="UPA00379">
    <property type="reaction ID" value="UER00551"/>
</dbReference>
<dbReference type="EvolutionaryTrace" id="P42084"/>
<dbReference type="Proteomes" id="UP000001570">
    <property type="component" value="Chromosome"/>
</dbReference>
<dbReference type="GO" id="GO:0005737">
    <property type="term" value="C:cytoplasm"/>
    <property type="evidence" value="ECO:0007669"/>
    <property type="project" value="UniProtKB-SubCell"/>
</dbReference>
<dbReference type="GO" id="GO:0050480">
    <property type="term" value="F:imidazolonepropionase activity"/>
    <property type="evidence" value="ECO:0000318"/>
    <property type="project" value="GO_Central"/>
</dbReference>
<dbReference type="GO" id="GO:0005506">
    <property type="term" value="F:iron ion binding"/>
    <property type="evidence" value="ECO:0007669"/>
    <property type="project" value="UniProtKB-UniRule"/>
</dbReference>
<dbReference type="GO" id="GO:0008270">
    <property type="term" value="F:zinc ion binding"/>
    <property type="evidence" value="ECO:0007669"/>
    <property type="project" value="UniProtKB-UniRule"/>
</dbReference>
<dbReference type="GO" id="GO:0006548">
    <property type="term" value="P:L-histidine catabolic process"/>
    <property type="evidence" value="ECO:0000318"/>
    <property type="project" value="GO_Central"/>
</dbReference>
<dbReference type="GO" id="GO:0019556">
    <property type="term" value="P:L-histidine catabolic process to glutamate and formamide"/>
    <property type="evidence" value="ECO:0007669"/>
    <property type="project" value="UniProtKB-UniPathway"/>
</dbReference>
<dbReference type="GO" id="GO:0019557">
    <property type="term" value="P:L-histidine catabolic process to glutamate and formate"/>
    <property type="evidence" value="ECO:0007669"/>
    <property type="project" value="UniProtKB-UniPathway"/>
</dbReference>
<dbReference type="CDD" id="cd01296">
    <property type="entry name" value="Imidazolone-5PH"/>
    <property type="match status" value="1"/>
</dbReference>
<dbReference type="FunFam" id="3.20.20.140:FF:000007">
    <property type="entry name" value="Imidazolonepropionase"/>
    <property type="match status" value="1"/>
</dbReference>
<dbReference type="Gene3D" id="3.20.20.140">
    <property type="entry name" value="Metal-dependent hydrolases"/>
    <property type="match status" value="1"/>
</dbReference>
<dbReference type="Gene3D" id="2.30.40.10">
    <property type="entry name" value="Urease, subunit C, domain 1"/>
    <property type="match status" value="1"/>
</dbReference>
<dbReference type="HAMAP" id="MF_00372">
    <property type="entry name" value="HutI"/>
    <property type="match status" value="1"/>
</dbReference>
<dbReference type="InterPro" id="IPR006680">
    <property type="entry name" value="Amidohydro-rel"/>
</dbReference>
<dbReference type="InterPro" id="IPR005920">
    <property type="entry name" value="HutI"/>
</dbReference>
<dbReference type="InterPro" id="IPR011059">
    <property type="entry name" value="Metal-dep_hydrolase_composite"/>
</dbReference>
<dbReference type="InterPro" id="IPR032466">
    <property type="entry name" value="Metal_Hydrolase"/>
</dbReference>
<dbReference type="NCBIfam" id="TIGR01224">
    <property type="entry name" value="hutI"/>
    <property type="match status" value="1"/>
</dbReference>
<dbReference type="PANTHER" id="PTHR42752">
    <property type="entry name" value="IMIDAZOLONEPROPIONASE"/>
    <property type="match status" value="1"/>
</dbReference>
<dbReference type="PANTHER" id="PTHR42752:SF1">
    <property type="entry name" value="IMIDAZOLONEPROPIONASE-RELATED"/>
    <property type="match status" value="1"/>
</dbReference>
<dbReference type="Pfam" id="PF01979">
    <property type="entry name" value="Amidohydro_1"/>
    <property type="match status" value="1"/>
</dbReference>
<dbReference type="SUPFAM" id="SSF51338">
    <property type="entry name" value="Composite domain of metallo-dependent hydrolases"/>
    <property type="match status" value="2"/>
</dbReference>
<dbReference type="SUPFAM" id="SSF51556">
    <property type="entry name" value="Metallo-dependent hydrolases"/>
    <property type="match status" value="1"/>
</dbReference>
<reference key="1">
    <citation type="journal article" date="1995" name="Microbiology">
        <title>Cloning and sequencing of a 29 kb region of the Bacillus subtilis genome containing the hut and wapA loci.</title>
        <authorList>
            <person name="Yoshida K."/>
            <person name="Sano H."/>
            <person name="Seki S."/>
            <person name="Oda M."/>
            <person name="Fujimura M."/>
            <person name="Fujita Y."/>
        </authorList>
    </citation>
    <scope>NUCLEOTIDE SEQUENCE [GENOMIC DNA]</scope>
    <source>
        <strain>168 / BGSC1A1</strain>
    </source>
</reference>
<reference key="2">
    <citation type="journal article" date="1997" name="Nature">
        <title>The complete genome sequence of the Gram-positive bacterium Bacillus subtilis.</title>
        <authorList>
            <person name="Kunst F."/>
            <person name="Ogasawara N."/>
            <person name="Moszer I."/>
            <person name="Albertini A.M."/>
            <person name="Alloni G."/>
            <person name="Azevedo V."/>
            <person name="Bertero M.G."/>
            <person name="Bessieres P."/>
            <person name="Bolotin A."/>
            <person name="Borchert S."/>
            <person name="Borriss R."/>
            <person name="Boursier L."/>
            <person name="Brans A."/>
            <person name="Braun M."/>
            <person name="Brignell S.C."/>
            <person name="Bron S."/>
            <person name="Brouillet S."/>
            <person name="Bruschi C.V."/>
            <person name="Caldwell B."/>
            <person name="Capuano V."/>
            <person name="Carter N.M."/>
            <person name="Choi S.-K."/>
            <person name="Codani J.-J."/>
            <person name="Connerton I.F."/>
            <person name="Cummings N.J."/>
            <person name="Daniel R.A."/>
            <person name="Denizot F."/>
            <person name="Devine K.M."/>
            <person name="Duesterhoeft A."/>
            <person name="Ehrlich S.D."/>
            <person name="Emmerson P.T."/>
            <person name="Entian K.-D."/>
            <person name="Errington J."/>
            <person name="Fabret C."/>
            <person name="Ferrari E."/>
            <person name="Foulger D."/>
            <person name="Fritz C."/>
            <person name="Fujita M."/>
            <person name="Fujita Y."/>
            <person name="Fuma S."/>
            <person name="Galizzi A."/>
            <person name="Galleron N."/>
            <person name="Ghim S.-Y."/>
            <person name="Glaser P."/>
            <person name="Goffeau A."/>
            <person name="Golightly E.J."/>
            <person name="Grandi G."/>
            <person name="Guiseppi G."/>
            <person name="Guy B.J."/>
            <person name="Haga K."/>
            <person name="Haiech J."/>
            <person name="Harwood C.R."/>
            <person name="Henaut A."/>
            <person name="Hilbert H."/>
            <person name="Holsappel S."/>
            <person name="Hosono S."/>
            <person name="Hullo M.-F."/>
            <person name="Itaya M."/>
            <person name="Jones L.-M."/>
            <person name="Joris B."/>
            <person name="Karamata D."/>
            <person name="Kasahara Y."/>
            <person name="Klaerr-Blanchard M."/>
            <person name="Klein C."/>
            <person name="Kobayashi Y."/>
            <person name="Koetter P."/>
            <person name="Koningstein G."/>
            <person name="Krogh S."/>
            <person name="Kumano M."/>
            <person name="Kurita K."/>
            <person name="Lapidus A."/>
            <person name="Lardinois S."/>
            <person name="Lauber J."/>
            <person name="Lazarevic V."/>
            <person name="Lee S.-M."/>
            <person name="Levine A."/>
            <person name="Liu H."/>
            <person name="Masuda S."/>
            <person name="Mauel C."/>
            <person name="Medigue C."/>
            <person name="Medina N."/>
            <person name="Mellado R.P."/>
            <person name="Mizuno M."/>
            <person name="Moestl D."/>
            <person name="Nakai S."/>
            <person name="Noback M."/>
            <person name="Noone D."/>
            <person name="O'Reilly M."/>
            <person name="Ogawa K."/>
            <person name="Ogiwara A."/>
            <person name="Oudega B."/>
            <person name="Park S.-H."/>
            <person name="Parro V."/>
            <person name="Pohl T.M."/>
            <person name="Portetelle D."/>
            <person name="Porwollik S."/>
            <person name="Prescott A.M."/>
            <person name="Presecan E."/>
            <person name="Pujic P."/>
            <person name="Purnelle B."/>
            <person name="Rapoport G."/>
            <person name="Rey M."/>
            <person name="Reynolds S."/>
            <person name="Rieger M."/>
            <person name="Rivolta C."/>
            <person name="Rocha E."/>
            <person name="Roche B."/>
            <person name="Rose M."/>
            <person name="Sadaie Y."/>
            <person name="Sato T."/>
            <person name="Scanlan E."/>
            <person name="Schleich S."/>
            <person name="Schroeter R."/>
            <person name="Scoffone F."/>
            <person name="Sekiguchi J."/>
            <person name="Sekowska A."/>
            <person name="Seror S.J."/>
            <person name="Serror P."/>
            <person name="Shin B.-S."/>
            <person name="Soldo B."/>
            <person name="Sorokin A."/>
            <person name="Tacconi E."/>
            <person name="Takagi T."/>
            <person name="Takahashi H."/>
            <person name="Takemaru K."/>
            <person name="Takeuchi M."/>
            <person name="Tamakoshi A."/>
            <person name="Tanaka T."/>
            <person name="Terpstra P."/>
            <person name="Tognoni A."/>
            <person name="Tosato V."/>
            <person name="Uchiyama S."/>
            <person name="Vandenbol M."/>
            <person name="Vannier F."/>
            <person name="Vassarotti A."/>
            <person name="Viari A."/>
            <person name="Wambutt R."/>
            <person name="Wedler E."/>
            <person name="Wedler H."/>
            <person name="Weitzenegger T."/>
            <person name="Winters P."/>
            <person name="Wipat A."/>
            <person name="Yamamoto H."/>
            <person name="Yamane K."/>
            <person name="Yasumoto K."/>
            <person name="Yata K."/>
            <person name="Yoshida K."/>
            <person name="Yoshikawa H.-F."/>
            <person name="Zumstein E."/>
            <person name="Yoshikawa H."/>
            <person name="Danchin A."/>
        </authorList>
    </citation>
    <scope>NUCLEOTIDE SEQUENCE [LARGE SCALE GENOMIC DNA]</scope>
    <source>
        <strain>168</strain>
    </source>
</reference>
<reference key="3">
    <citation type="journal article" date="2016" name="Phys. Chem. Chem. Phys.">
        <title>Exploring the substrate specificity and catalytic mechanism of imidazolonepropionase (HutI) from Bacillus subtilis.</title>
        <authorList>
            <person name="Su H."/>
            <person name="Sheng X."/>
            <person name="Liu Y."/>
        </authorList>
    </citation>
    <scope>FUNCTION</scope>
    <scope>CATALYTIC ACTIVITY</scope>
</reference>
<reference evidence="6 7" key="4">
    <citation type="journal article" date="2006" name="J. Biol. Chem.">
        <title>A catalytic mechanism revealed by the crystal structures of the imidazolonepropionase from Bacillus subtilis.</title>
        <authorList>
            <person name="Yu Y."/>
            <person name="Liang Y.-H."/>
            <person name="Brostromer E."/>
            <person name="Quan J.-M."/>
            <person name="Panjikar S."/>
            <person name="Dong Y.-H."/>
            <person name="Su X.-D."/>
        </authorList>
    </citation>
    <scope>X-RAY CRYSTALLOGRAPHY (2.0 ANGSTROMS) IN COMPLEXES WITH SUBSTRATE ANALOG IMIDAZOLE-4-ACETATE AND ZINC IONS</scope>
    <scope>SUBUNIT</scope>
</reference>
<protein>
    <recommendedName>
        <fullName evidence="1 3">Imidazolonepropionase</fullName>
        <ecNumber evidence="1 5">3.5.2.7</ecNumber>
    </recommendedName>
    <alternativeName>
        <fullName evidence="1">Imidazolone-5-propionate hydrolase</fullName>
    </alternativeName>
</protein>